<gene>
    <name evidence="1" type="primary">ytfE</name>
    <name type="ordered locus">SbBS512_E4750</name>
</gene>
<accession>B2TYT0</accession>
<comment type="function">
    <text evidence="1">Di-iron-containing protein involved in the repair of iron-sulfur clusters damaged by oxidative and nitrosative stress conditions.</text>
</comment>
<comment type="subunit">
    <text evidence="1">Homodimer.</text>
</comment>
<comment type="subcellular location">
    <subcellularLocation>
        <location evidence="1">Cytoplasm</location>
    </subcellularLocation>
</comment>
<comment type="similarity">
    <text evidence="1">Belongs to the RIC family. YtfE subfamily.</text>
</comment>
<proteinExistence type="inferred from homology"/>
<protein>
    <recommendedName>
        <fullName evidence="1">Iron-sulfur cluster repair protein YtfE</fullName>
    </recommendedName>
</protein>
<reference key="1">
    <citation type="submission" date="2008-05" db="EMBL/GenBank/DDBJ databases">
        <title>Complete sequence of Shigella boydii serotype 18 strain BS512.</title>
        <authorList>
            <person name="Rasko D.A."/>
            <person name="Rosovitz M."/>
            <person name="Maurelli A.T."/>
            <person name="Myers G."/>
            <person name="Seshadri R."/>
            <person name="Cer R."/>
            <person name="Jiang L."/>
            <person name="Ravel J."/>
            <person name="Sebastian Y."/>
        </authorList>
    </citation>
    <scope>NUCLEOTIDE SEQUENCE [LARGE SCALE GENOMIC DNA]</scope>
    <source>
        <strain>CDC 3083-94 / BS512</strain>
    </source>
</reference>
<sequence>MAYRDQPLGELALSIPRASALFRKYDMDYCCGGKQTLARAAARKELDVEVIEAELAKLAEQPIEKDWRSAPLAEIIDHIIVRYHDRHREQLPELILQATKVERVHADKPSVPKGLTKYLTMLHEELSSHMMKEEQILFPMIKQGMGSQAMGPISVMESEHDEAGELLEVIKHTTNNVTPPPEACTTWKAMYNGINELIDDLMDHISLENNVLFPRALAGE</sequence>
<feature type="chain" id="PRO_1000148190" description="Iron-sulfur cluster repair protein YtfE">
    <location>
        <begin position="1"/>
        <end position="220"/>
    </location>
</feature>
<evidence type="ECO:0000255" key="1">
    <source>
        <dbReference type="HAMAP-Rule" id="MF_01606"/>
    </source>
</evidence>
<dbReference type="EMBL" id="CP001063">
    <property type="protein sequence ID" value="ACD09472.1"/>
    <property type="molecule type" value="Genomic_DNA"/>
</dbReference>
<dbReference type="RefSeq" id="WP_000331456.1">
    <property type="nucleotide sequence ID" value="NC_010658.1"/>
</dbReference>
<dbReference type="SMR" id="B2TYT0"/>
<dbReference type="STRING" id="344609.SbBS512_E4750"/>
<dbReference type="GeneID" id="93777612"/>
<dbReference type="KEGG" id="sbc:SbBS512_E4750"/>
<dbReference type="HOGENOM" id="CLU_076075_2_0_6"/>
<dbReference type="Proteomes" id="UP000001030">
    <property type="component" value="Chromosome"/>
</dbReference>
<dbReference type="GO" id="GO:0005737">
    <property type="term" value="C:cytoplasm"/>
    <property type="evidence" value="ECO:0007669"/>
    <property type="project" value="UniProtKB-SubCell"/>
</dbReference>
<dbReference type="GO" id="GO:0046872">
    <property type="term" value="F:metal ion binding"/>
    <property type="evidence" value="ECO:0007669"/>
    <property type="project" value="UniProtKB-KW"/>
</dbReference>
<dbReference type="GO" id="GO:0030091">
    <property type="term" value="P:protein repair"/>
    <property type="evidence" value="ECO:0007669"/>
    <property type="project" value="UniProtKB-UniRule"/>
</dbReference>
<dbReference type="GO" id="GO:0051409">
    <property type="term" value="P:response to nitrosative stress"/>
    <property type="evidence" value="ECO:0007669"/>
    <property type="project" value="UniProtKB-UniRule"/>
</dbReference>
<dbReference type="GO" id="GO:0006979">
    <property type="term" value="P:response to oxidative stress"/>
    <property type="evidence" value="ECO:0007669"/>
    <property type="project" value="UniProtKB-UniRule"/>
</dbReference>
<dbReference type="CDD" id="cd12108">
    <property type="entry name" value="Hr-like"/>
    <property type="match status" value="1"/>
</dbReference>
<dbReference type="FunFam" id="1.20.120.520:FF:000001">
    <property type="entry name" value="Iron-sulfur cluster repair protein YtfE"/>
    <property type="match status" value="1"/>
</dbReference>
<dbReference type="Gene3D" id="1.20.120.520">
    <property type="entry name" value="nmb1532 protein domain like"/>
    <property type="match status" value="1"/>
</dbReference>
<dbReference type="HAMAP" id="MF_01606">
    <property type="entry name" value="RIC_YtfE"/>
    <property type="match status" value="1"/>
</dbReference>
<dbReference type="InterPro" id="IPR023742">
    <property type="entry name" value="FeS-repair_YftE"/>
</dbReference>
<dbReference type="InterPro" id="IPR012312">
    <property type="entry name" value="Hemerythrin-like"/>
</dbReference>
<dbReference type="InterPro" id="IPR019903">
    <property type="entry name" value="RIC_family"/>
</dbReference>
<dbReference type="NCBIfam" id="TIGR03652">
    <property type="entry name" value="FeS_repair_RIC"/>
    <property type="match status" value="1"/>
</dbReference>
<dbReference type="NCBIfam" id="NF008221">
    <property type="entry name" value="PRK10992.1"/>
    <property type="match status" value="1"/>
</dbReference>
<dbReference type="PANTHER" id="PTHR36438">
    <property type="entry name" value="IRON-SULFUR CLUSTER REPAIR PROTEIN YTFE"/>
    <property type="match status" value="1"/>
</dbReference>
<dbReference type="PANTHER" id="PTHR36438:SF1">
    <property type="entry name" value="IRON-SULFUR CLUSTER REPAIR PROTEIN YTFE"/>
    <property type="match status" value="1"/>
</dbReference>
<dbReference type="Pfam" id="PF01814">
    <property type="entry name" value="Hemerythrin"/>
    <property type="match status" value="1"/>
</dbReference>
<dbReference type="Pfam" id="PF04405">
    <property type="entry name" value="ScdA_N"/>
    <property type="match status" value="1"/>
</dbReference>
<organism>
    <name type="scientific">Shigella boydii serotype 18 (strain CDC 3083-94 / BS512)</name>
    <dbReference type="NCBI Taxonomy" id="344609"/>
    <lineage>
        <taxon>Bacteria</taxon>
        <taxon>Pseudomonadati</taxon>
        <taxon>Pseudomonadota</taxon>
        <taxon>Gammaproteobacteria</taxon>
        <taxon>Enterobacterales</taxon>
        <taxon>Enterobacteriaceae</taxon>
        <taxon>Shigella</taxon>
    </lineage>
</organism>
<keyword id="KW-0963">Cytoplasm</keyword>
<keyword id="KW-0408">Iron</keyword>
<keyword id="KW-0479">Metal-binding</keyword>
<keyword id="KW-1185">Reference proteome</keyword>
<keyword id="KW-0346">Stress response</keyword>
<name>YTFE_SHIB3</name>